<reference key="1">
    <citation type="journal article" date="2002" name="J. Bacteriol.">
        <title>Genome sequence and analysis of the oral bacterium Fusobacterium nucleatum strain ATCC 25586.</title>
        <authorList>
            <person name="Kapatral V."/>
            <person name="Anderson I."/>
            <person name="Ivanova N."/>
            <person name="Reznik G."/>
            <person name="Los T."/>
            <person name="Lykidis A."/>
            <person name="Bhattacharyya A."/>
            <person name="Bartman A."/>
            <person name="Gardner W."/>
            <person name="Grechkin G."/>
            <person name="Zhu L."/>
            <person name="Vasieva O."/>
            <person name="Chu L."/>
            <person name="Kogan Y."/>
            <person name="Chaga O."/>
            <person name="Goltsman E."/>
            <person name="Bernal A."/>
            <person name="Larsen N."/>
            <person name="D'Souza M."/>
            <person name="Walunas T."/>
            <person name="Pusch G."/>
            <person name="Haselkorn R."/>
            <person name="Fonstein M."/>
            <person name="Kyrpides N.C."/>
            <person name="Overbeek R."/>
        </authorList>
    </citation>
    <scope>NUCLEOTIDE SEQUENCE [LARGE SCALE GENOMIC DNA]</scope>
    <source>
        <strain>ATCC 25586 / DSM 15643 / BCRC 10681 / CIP 101130 / JCM 8532 / KCTC 2640 / LMG 13131 / VPI 4355</strain>
    </source>
</reference>
<organism>
    <name type="scientific">Fusobacterium nucleatum subsp. nucleatum (strain ATCC 25586 / DSM 15643 / BCRC 10681 / CIP 101130 / JCM 8532 / KCTC 2640 / LMG 13131 / VPI 4355)</name>
    <dbReference type="NCBI Taxonomy" id="190304"/>
    <lineage>
        <taxon>Bacteria</taxon>
        <taxon>Fusobacteriati</taxon>
        <taxon>Fusobacteriota</taxon>
        <taxon>Fusobacteriia</taxon>
        <taxon>Fusobacteriales</taxon>
        <taxon>Fusobacteriaceae</taxon>
        <taxon>Fusobacterium</taxon>
    </lineage>
</organism>
<name>CBID_FUSNN</name>
<feature type="chain" id="PRO_0000141665" description="Cobalt-precorrin-5B C(1)-methyltransferase">
    <location>
        <begin position="1"/>
        <end position="375"/>
    </location>
</feature>
<protein>
    <recommendedName>
        <fullName evidence="1">Cobalt-precorrin-5B C(1)-methyltransferase</fullName>
        <ecNumber evidence="1">2.1.1.195</ecNumber>
    </recommendedName>
    <alternativeName>
        <fullName evidence="1">Cobalt-precorrin-6A synthase</fullName>
    </alternativeName>
</protein>
<dbReference type="EC" id="2.1.1.195" evidence="1"/>
<dbReference type="EMBL" id="AE009951">
    <property type="protein sequence ID" value="AAL95163.1"/>
    <property type="molecule type" value="Genomic_DNA"/>
</dbReference>
<dbReference type="RefSeq" id="NP_603864.1">
    <property type="nucleotide sequence ID" value="NC_003454.1"/>
</dbReference>
<dbReference type="RefSeq" id="WP_011016792.1">
    <property type="nucleotide sequence ID" value="NZ_CP028101.1"/>
</dbReference>
<dbReference type="SMR" id="Q8REW8"/>
<dbReference type="STRING" id="190304.FN0967"/>
<dbReference type="PaxDb" id="190304-FN0967"/>
<dbReference type="EnsemblBacteria" id="AAL95163">
    <property type="protein sequence ID" value="AAL95163"/>
    <property type="gene ID" value="FN0967"/>
</dbReference>
<dbReference type="GeneID" id="79783950"/>
<dbReference type="KEGG" id="fnu:FN0967"/>
<dbReference type="PATRIC" id="fig|190304.8.peg.1532"/>
<dbReference type="eggNOG" id="COG1903">
    <property type="taxonomic scope" value="Bacteria"/>
</dbReference>
<dbReference type="HOGENOM" id="CLU_041273_1_0_0"/>
<dbReference type="InParanoid" id="Q8REW8"/>
<dbReference type="BioCyc" id="FNUC190304:G1FZS-1549-MONOMER"/>
<dbReference type="UniPathway" id="UPA00148">
    <property type="reaction ID" value="UER00227"/>
</dbReference>
<dbReference type="Proteomes" id="UP000002521">
    <property type="component" value="Chromosome"/>
</dbReference>
<dbReference type="GO" id="GO:0043780">
    <property type="term" value="F:cobalt-precorrin-5B C1-methyltransferase activity"/>
    <property type="evidence" value="ECO:0007669"/>
    <property type="project" value="RHEA"/>
</dbReference>
<dbReference type="GO" id="GO:0019251">
    <property type="term" value="P:anaerobic cobalamin biosynthetic process"/>
    <property type="evidence" value="ECO:0007669"/>
    <property type="project" value="UniProtKB-UniRule"/>
</dbReference>
<dbReference type="GO" id="GO:0032259">
    <property type="term" value="P:methylation"/>
    <property type="evidence" value="ECO:0007669"/>
    <property type="project" value="UniProtKB-KW"/>
</dbReference>
<dbReference type="Gene3D" id="3.30.2110.10">
    <property type="entry name" value="CbiD-like"/>
    <property type="match status" value="1"/>
</dbReference>
<dbReference type="HAMAP" id="MF_00787">
    <property type="entry name" value="CbiD"/>
    <property type="match status" value="1"/>
</dbReference>
<dbReference type="InterPro" id="IPR002748">
    <property type="entry name" value="CbiD"/>
</dbReference>
<dbReference type="InterPro" id="IPR036074">
    <property type="entry name" value="CbiD_sf"/>
</dbReference>
<dbReference type="NCBIfam" id="TIGR00312">
    <property type="entry name" value="cbiD"/>
    <property type="match status" value="1"/>
</dbReference>
<dbReference type="PANTHER" id="PTHR35863">
    <property type="entry name" value="COBALT-PRECORRIN-5B C(1)-METHYLTRANSFERASE"/>
    <property type="match status" value="1"/>
</dbReference>
<dbReference type="PANTHER" id="PTHR35863:SF1">
    <property type="entry name" value="COBALT-PRECORRIN-5B C(1)-METHYLTRANSFERASE"/>
    <property type="match status" value="1"/>
</dbReference>
<dbReference type="Pfam" id="PF01888">
    <property type="entry name" value="CbiD"/>
    <property type="match status" value="1"/>
</dbReference>
<dbReference type="PIRSF" id="PIRSF026782">
    <property type="entry name" value="CbiD"/>
    <property type="match status" value="1"/>
</dbReference>
<dbReference type="SUPFAM" id="SSF111342">
    <property type="entry name" value="CbiD-like"/>
    <property type="match status" value="1"/>
</dbReference>
<accession>Q8REW8</accession>
<evidence type="ECO:0000255" key="1">
    <source>
        <dbReference type="HAMAP-Rule" id="MF_00787"/>
    </source>
</evidence>
<keyword id="KW-0169">Cobalamin biosynthesis</keyword>
<keyword id="KW-0489">Methyltransferase</keyword>
<keyword id="KW-1185">Reference proteome</keyword>
<keyword id="KW-0949">S-adenosyl-L-methionine</keyword>
<keyword id="KW-0808">Transferase</keyword>
<gene>
    <name evidence="1" type="primary">cbiD</name>
    <name type="ordered locus">FN0967</name>
</gene>
<comment type="function">
    <text evidence="1">Catalyzes the methylation of C-1 in cobalt-precorrin-5B to form cobalt-precorrin-6A.</text>
</comment>
<comment type="catalytic activity">
    <reaction evidence="1">
        <text>Co-precorrin-5B + S-adenosyl-L-methionine = Co-precorrin-6A + S-adenosyl-L-homocysteine</text>
        <dbReference type="Rhea" id="RHEA:26285"/>
        <dbReference type="ChEBI" id="CHEBI:57856"/>
        <dbReference type="ChEBI" id="CHEBI:59789"/>
        <dbReference type="ChEBI" id="CHEBI:60063"/>
        <dbReference type="ChEBI" id="CHEBI:60064"/>
        <dbReference type="EC" id="2.1.1.195"/>
    </reaction>
</comment>
<comment type="pathway">
    <text evidence="1">Cofactor biosynthesis; adenosylcobalamin biosynthesis; cob(II)yrinate a,c-diamide from sirohydrochlorin (anaerobic route): step 6/10.</text>
</comment>
<comment type="similarity">
    <text evidence="1">Belongs to the CbiD family.</text>
</comment>
<proteinExistence type="inferred from homology"/>
<sequence>MEEKELKNGYTTGTCATAAVKVALEALIYGKKATEVDITTLNYTNLKIPVQKLRVRNNFASCAIQKYAGDDPDVTNGISICAKVQLVKELPKVDRGAYYDNCVIIGGRGVGFVTKKGLQIAVGKSAINPGPQKMITSVVNEILDGSDEKVIITIYVPEGRAKALKTYNPKMGVIGGISVLGTTGIVKAMSEDALKKSMFAELKVMREDKNRDWIIFAFGNYGERHCQKIGLDTEQLIIISNFVGFMIEAAVKLEFKKIIMLGHIAKAIKVAGGIFNTHSRVADGRMETMAACAFLVDEKPEIIRKILASNTIEEACDYIEKKEIYHLIANRVAFKMQEYARADIEVSAAIFSFKGETIGESDNYQRMVGECGAIK</sequence>